<dbReference type="EC" id="2.1.3.-" evidence="1"/>
<dbReference type="EMBL" id="CU928145">
    <property type="protein sequence ID" value="CAU97907.1"/>
    <property type="molecule type" value="Genomic_DNA"/>
</dbReference>
<dbReference type="RefSeq" id="WP_000019588.1">
    <property type="nucleotide sequence ID" value="NZ_CP028304.1"/>
</dbReference>
<dbReference type="SMR" id="B7L7S3"/>
<dbReference type="GeneID" id="75202724"/>
<dbReference type="KEGG" id="eck:EC55989_2049"/>
<dbReference type="HOGENOM" id="CLU_078475_0_0_6"/>
<dbReference type="Proteomes" id="UP000000746">
    <property type="component" value="Chromosome"/>
</dbReference>
<dbReference type="GO" id="GO:0016743">
    <property type="term" value="F:carboxyl- or carbamoyltransferase activity"/>
    <property type="evidence" value="ECO:0007669"/>
    <property type="project" value="UniProtKB-UniRule"/>
</dbReference>
<dbReference type="GO" id="GO:1904047">
    <property type="term" value="F:S-adenosyl-L-methionine binding"/>
    <property type="evidence" value="ECO:0007669"/>
    <property type="project" value="UniProtKB-UniRule"/>
</dbReference>
<dbReference type="GO" id="GO:0002098">
    <property type="term" value="P:tRNA wobble uridine modification"/>
    <property type="evidence" value="ECO:0007669"/>
    <property type="project" value="InterPro"/>
</dbReference>
<dbReference type="CDD" id="cd02440">
    <property type="entry name" value="AdoMet_MTases"/>
    <property type="match status" value="1"/>
</dbReference>
<dbReference type="FunFam" id="3.40.50.150:FF:000030">
    <property type="entry name" value="Carboxy-S-adenosyl-L-methionine synthase"/>
    <property type="match status" value="1"/>
</dbReference>
<dbReference type="Gene3D" id="3.40.50.150">
    <property type="entry name" value="Vaccinia Virus protein VP39"/>
    <property type="match status" value="1"/>
</dbReference>
<dbReference type="HAMAP" id="MF_01589">
    <property type="entry name" value="Cx_SAM_synthase"/>
    <property type="match status" value="1"/>
</dbReference>
<dbReference type="InterPro" id="IPR005271">
    <property type="entry name" value="CmoA"/>
</dbReference>
<dbReference type="InterPro" id="IPR041698">
    <property type="entry name" value="Methyltransf_25"/>
</dbReference>
<dbReference type="InterPro" id="IPR029063">
    <property type="entry name" value="SAM-dependent_MTases_sf"/>
</dbReference>
<dbReference type="NCBIfam" id="TIGR00740">
    <property type="entry name" value="carboxy-S-adenosyl-L-methionine synthase CmoA"/>
    <property type="match status" value="1"/>
</dbReference>
<dbReference type="NCBIfam" id="NF011995">
    <property type="entry name" value="PRK15451.1"/>
    <property type="match status" value="1"/>
</dbReference>
<dbReference type="PANTHER" id="PTHR43861:SF2">
    <property type="entry name" value="CARBOXY-S-ADENOSYL-L-METHIONINE SYNTHASE"/>
    <property type="match status" value="1"/>
</dbReference>
<dbReference type="PANTHER" id="PTHR43861">
    <property type="entry name" value="TRANS-ACONITATE 2-METHYLTRANSFERASE-RELATED"/>
    <property type="match status" value="1"/>
</dbReference>
<dbReference type="Pfam" id="PF13649">
    <property type="entry name" value="Methyltransf_25"/>
    <property type="match status" value="1"/>
</dbReference>
<dbReference type="PIRSF" id="PIRSF006325">
    <property type="entry name" value="MeTrfase_bac"/>
    <property type="match status" value="1"/>
</dbReference>
<dbReference type="SUPFAM" id="SSF53335">
    <property type="entry name" value="S-adenosyl-L-methionine-dependent methyltransferases"/>
    <property type="match status" value="1"/>
</dbReference>
<protein>
    <recommendedName>
        <fullName evidence="1">Carboxy-S-adenosyl-L-methionine synthase</fullName>
        <shortName evidence="1">Cx-SAM synthase</shortName>
        <ecNumber evidence="1">2.1.3.-</ecNumber>
    </recommendedName>
</protein>
<feature type="chain" id="PRO_1000185684" description="Carboxy-S-adenosyl-L-methionine synthase">
    <location>
        <begin position="1"/>
        <end position="247"/>
    </location>
</feature>
<feature type="binding site" evidence="1">
    <location>
        <position position="39"/>
    </location>
    <ligand>
        <name>S-adenosyl-L-methionine</name>
        <dbReference type="ChEBI" id="CHEBI:59789"/>
    </ligand>
</feature>
<feature type="binding site" evidence="1">
    <location>
        <begin position="64"/>
        <end position="66"/>
    </location>
    <ligand>
        <name>S-adenosyl-L-methionine</name>
        <dbReference type="ChEBI" id="CHEBI:59789"/>
    </ligand>
</feature>
<feature type="binding site" evidence="1">
    <location>
        <begin position="89"/>
        <end position="90"/>
    </location>
    <ligand>
        <name>S-adenosyl-L-methionine</name>
        <dbReference type="ChEBI" id="CHEBI:59789"/>
    </ligand>
</feature>
<feature type="binding site" evidence="1">
    <location>
        <begin position="117"/>
        <end position="118"/>
    </location>
    <ligand>
        <name>S-adenosyl-L-methionine</name>
        <dbReference type="ChEBI" id="CHEBI:59789"/>
    </ligand>
</feature>
<feature type="binding site" evidence="1">
    <location>
        <position position="132"/>
    </location>
    <ligand>
        <name>S-adenosyl-L-methionine</name>
        <dbReference type="ChEBI" id="CHEBI:59789"/>
    </ligand>
</feature>
<feature type="binding site" evidence="1">
    <location>
        <position position="199"/>
    </location>
    <ligand>
        <name>S-adenosyl-L-methionine</name>
        <dbReference type="ChEBI" id="CHEBI:59789"/>
    </ligand>
</feature>
<accession>B7L7S3</accession>
<proteinExistence type="inferred from homology"/>
<gene>
    <name evidence="1" type="primary">cmoA</name>
    <name type="ordered locus">EC55989_2049</name>
</gene>
<sequence>MSHRDTLFSAPIARLGDWTFDERVAEVFPDMIQRSVPGYSNIISMIGMLAERFVQPGTQVYDLGCSLGAATLSVRRNIHHDNCKIIAIDNSPAMIERCRRHIDAYKAPTPVDVIEGDIRDIAIENASMVVLNFTLQFLEPSERQALLDKIYQGLNPGGALVLSEKFSFEDAKVGELLFNMHHDFKRANGYSELEISQKRSMLENVMLTDSVETHKARLHKAGFEHSELWFQCFNFGSLVALKAEDAA</sequence>
<comment type="function">
    <text evidence="1">Catalyzes the conversion of S-adenosyl-L-methionine (SAM) to carboxy-S-adenosyl-L-methionine (Cx-SAM).</text>
</comment>
<comment type="catalytic activity">
    <reaction evidence="1">
        <text>prephenate + S-adenosyl-L-methionine = carboxy-S-adenosyl-L-methionine + 3-phenylpyruvate + H2O</text>
        <dbReference type="Rhea" id="RHEA:51692"/>
        <dbReference type="ChEBI" id="CHEBI:15377"/>
        <dbReference type="ChEBI" id="CHEBI:18005"/>
        <dbReference type="ChEBI" id="CHEBI:29934"/>
        <dbReference type="ChEBI" id="CHEBI:59789"/>
        <dbReference type="ChEBI" id="CHEBI:134278"/>
    </reaction>
</comment>
<comment type="subunit">
    <text evidence="1">Homodimer.</text>
</comment>
<comment type="similarity">
    <text evidence="1">Belongs to the class I-like SAM-binding methyltransferase superfamily. Cx-SAM synthase family.</text>
</comment>
<name>CMOA_ECO55</name>
<evidence type="ECO:0000255" key="1">
    <source>
        <dbReference type="HAMAP-Rule" id="MF_01589"/>
    </source>
</evidence>
<keyword id="KW-1185">Reference proteome</keyword>
<keyword id="KW-0949">S-adenosyl-L-methionine</keyword>
<keyword id="KW-0808">Transferase</keyword>
<reference key="1">
    <citation type="journal article" date="2009" name="PLoS Genet.">
        <title>Organised genome dynamics in the Escherichia coli species results in highly diverse adaptive paths.</title>
        <authorList>
            <person name="Touchon M."/>
            <person name="Hoede C."/>
            <person name="Tenaillon O."/>
            <person name="Barbe V."/>
            <person name="Baeriswyl S."/>
            <person name="Bidet P."/>
            <person name="Bingen E."/>
            <person name="Bonacorsi S."/>
            <person name="Bouchier C."/>
            <person name="Bouvet O."/>
            <person name="Calteau A."/>
            <person name="Chiapello H."/>
            <person name="Clermont O."/>
            <person name="Cruveiller S."/>
            <person name="Danchin A."/>
            <person name="Diard M."/>
            <person name="Dossat C."/>
            <person name="Karoui M.E."/>
            <person name="Frapy E."/>
            <person name="Garry L."/>
            <person name="Ghigo J.M."/>
            <person name="Gilles A.M."/>
            <person name="Johnson J."/>
            <person name="Le Bouguenec C."/>
            <person name="Lescat M."/>
            <person name="Mangenot S."/>
            <person name="Martinez-Jehanne V."/>
            <person name="Matic I."/>
            <person name="Nassif X."/>
            <person name="Oztas S."/>
            <person name="Petit M.A."/>
            <person name="Pichon C."/>
            <person name="Rouy Z."/>
            <person name="Ruf C.S."/>
            <person name="Schneider D."/>
            <person name="Tourret J."/>
            <person name="Vacherie B."/>
            <person name="Vallenet D."/>
            <person name="Medigue C."/>
            <person name="Rocha E.P.C."/>
            <person name="Denamur E."/>
        </authorList>
    </citation>
    <scope>NUCLEOTIDE SEQUENCE [LARGE SCALE GENOMIC DNA]</scope>
    <source>
        <strain>55989 / EAEC</strain>
    </source>
</reference>
<organism>
    <name type="scientific">Escherichia coli (strain 55989 / EAEC)</name>
    <dbReference type="NCBI Taxonomy" id="585055"/>
    <lineage>
        <taxon>Bacteria</taxon>
        <taxon>Pseudomonadati</taxon>
        <taxon>Pseudomonadota</taxon>
        <taxon>Gammaproteobacteria</taxon>
        <taxon>Enterobacterales</taxon>
        <taxon>Enterobacteriaceae</taxon>
        <taxon>Escherichia</taxon>
    </lineage>
</organism>